<sequence>MDEQRSKALSAALSQIDKQFGKGAVMRLGDHNAIKDIEVYSTGSLGLDLALGVGGLPRGRVVEIYGPESSGKTTLTLHAIASCQAAGGTAAFIDAEHALDPGYAHKLGVDLENLLISQPDTGEQALEIADMLVRSGAVDLIVIDSVAALTPKAEIEGDMGDSHVGLQARLMSQALRKLTANISRTNTLVIFINQIRMKIGVMYGSPETTTGGNALKFYASVRLDIRRIGAIKKSDEVVGNDTRVKVVKNKVAPPFREAEFAIYYGEGISRLSELVDLGVKFDIVEKSGAWYSYQGERIGQGKDNARQYLKEHPELAANIEQRIRAAAAGHPLAFAEEVAEPAAVG</sequence>
<proteinExistence type="inferred from homology"/>
<keyword id="KW-0067">ATP-binding</keyword>
<keyword id="KW-0963">Cytoplasm</keyword>
<keyword id="KW-0227">DNA damage</keyword>
<keyword id="KW-0233">DNA recombination</keyword>
<keyword id="KW-0234">DNA repair</keyword>
<keyword id="KW-0238">DNA-binding</keyword>
<keyword id="KW-0547">Nucleotide-binding</keyword>
<keyword id="KW-0742">SOS response</keyword>
<organism>
    <name type="scientific">Acidithiobacillus ferrooxidans (strain ATCC 53993 / BNL-5-31)</name>
    <name type="common">Leptospirillum ferrooxidans (ATCC 53993)</name>
    <dbReference type="NCBI Taxonomy" id="380394"/>
    <lineage>
        <taxon>Bacteria</taxon>
        <taxon>Pseudomonadati</taxon>
        <taxon>Pseudomonadota</taxon>
        <taxon>Acidithiobacillia</taxon>
        <taxon>Acidithiobacillales</taxon>
        <taxon>Acidithiobacillaceae</taxon>
        <taxon>Acidithiobacillus</taxon>
    </lineage>
</organism>
<gene>
    <name evidence="1" type="primary">recA</name>
    <name type="ordered locus">Lferr_1050</name>
</gene>
<comment type="function">
    <text evidence="1">Can catalyze the hydrolysis of ATP in the presence of single-stranded DNA, the ATP-dependent uptake of single-stranded DNA by duplex DNA, and the ATP-dependent hybridization of homologous single-stranded DNAs. It interacts with LexA causing its activation and leading to its autocatalytic cleavage.</text>
</comment>
<comment type="subcellular location">
    <subcellularLocation>
        <location evidence="1">Cytoplasm</location>
    </subcellularLocation>
</comment>
<comment type="similarity">
    <text evidence="1">Belongs to the RecA family.</text>
</comment>
<evidence type="ECO:0000255" key="1">
    <source>
        <dbReference type="HAMAP-Rule" id="MF_00268"/>
    </source>
</evidence>
<protein>
    <recommendedName>
        <fullName evidence="1">Protein RecA</fullName>
    </recommendedName>
    <alternativeName>
        <fullName evidence="1">Recombinase A</fullName>
    </alternativeName>
</protein>
<name>RECA_ACIF5</name>
<accession>B5EQ47</accession>
<reference key="1">
    <citation type="submission" date="2008-08" db="EMBL/GenBank/DDBJ databases">
        <title>Complete sequence of Acidithiobacillus ferrooxidans ATCC 53993.</title>
        <authorList>
            <person name="Lucas S."/>
            <person name="Copeland A."/>
            <person name="Lapidus A."/>
            <person name="Glavina del Rio T."/>
            <person name="Dalin E."/>
            <person name="Tice H."/>
            <person name="Bruce D."/>
            <person name="Goodwin L."/>
            <person name="Pitluck S."/>
            <person name="Sims D."/>
            <person name="Brettin T."/>
            <person name="Detter J.C."/>
            <person name="Han C."/>
            <person name="Kuske C.R."/>
            <person name="Larimer F."/>
            <person name="Land M."/>
            <person name="Hauser L."/>
            <person name="Kyrpides N."/>
            <person name="Lykidis A."/>
            <person name="Borole A.P."/>
        </authorList>
    </citation>
    <scope>NUCLEOTIDE SEQUENCE [LARGE SCALE GENOMIC DNA]</scope>
    <source>
        <strain>ATCC 53993 / BNL-5-31</strain>
    </source>
</reference>
<dbReference type="EMBL" id="CP001132">
    <property type="protein sequence ID" value="ACH83292.1"/>
    <property type="molecule type" value="Genomic_DNA"/>
</dbReference>
<dbReference type="RefSeq" id="WP_012536446.1">
    <property type="nucleotide sequence ID" value="NC_011206.1"/>
</dbReference>
<dbReference type="SMR" id="B5EQ47"/>
<dbReference type="GeneID" id="65280253"/>
<dbReference type="KEGG" id="afe:Lferr_1050"/>
<dbReference type="eggNOG" id="COG0468">
    <property type="taxonomic scope" value="Bacteria"/>
</dbReference>
<dbReference type="HOGENOM" id="CLU_040469_3_2_6"/>
<dbReference type="GO" id="GO:0005829">
    <property type="term" value="C:cytosol"/>
    <property type="evidence" value="ECO:0007669"/>
    <property type="project" value="TreeGrafter"/>
</dbReference>
<dbReference type="GO" id="GO:0005524">
    <property type="term" value="F:ATP binding"/>
    <property type="evidence" value="ECO:0007669"/>
    <property type="project" value="UniProtKB-UniRule"/>
</dbReference>
<dbReference type="GO" id="GO:0016887">
    <property type="term" value="F:ATP hydrolysis activity"/>
    <property type="evidence" value="ECO:0007669"/>
    <property type="project" value="InterPro"/>
</dbReference>
<dbReference type="GO" id="GO:0140664">
    <property type="term" value="F:ATP-dependent DNA damage sensor activity"/>
    <property type="evidence" value="ECO:0007669"/>
    <property type="project" value="InterPro"/>
</dbReference>
<dbReference type="GO" id="GO:0003684">
    <property type="term" value="F:damaged DNA binding"/>
    <property type="evidence" value="ECO:0007669"/>
    <property type="project" value="UniProtKB-UniRule"/>
</dbReference>
<dbReference type="GO" id="GO:0003697">
    <property type="term" value="F:single-stranded DNA binding"/>
    <property type="evidence" value="ECO:0007669"/>
    <property type="project" value="UniProtKB-UniRule"/>
</dbReference>
<dbReference type="GO" id="GO:0006310">
    <property type="term" value="P:DNA recombination"/>
    <property type="evidence" value="ECO:0007669"/>
    <property type="project" value="UniProtKB-UniRule"/>
</dbReference>
<dbReference type="GO" id="GO:0006281">
    <property type="term" value="P:DNA repair"/>
    <property type="evidence" value="ECO:0007669"/>
    <property type="project" value="UniProtKB-UniRule"/>
</dbReference>
<dbReference type="GO" id="GO:0009432">
    <property type="term" value="P:SOS response"/>
    <property type="evidence" value="ECO:0007669"/>
    <property type="project" value="UniProtKB-UniRule"/>
</dbReference>
<dbReference type="CDD" id="cd00983">
    <property type="entry name" value="RecA"/>
    <property type="match status" value="1"/>
</dbReference>
<dbReference type="FunFam" id="3.40.50.300:FF:000087">
    <property type="entry name" value="Recombinase RecA"/>
    <property type="match status" value="1"/>
</dbReference>
<dbReference type="Gene3D" id="3.40.50.300">
    <property type="entry name" value="P-loop containing nucleotide triphosphate hydrolases"/>
    <property type="match status" value="1"/>
</dbReference>
<dbReference type="HAMAP" id="MF_00268">
    <property type="entry name" value="RecA"/>
    <property type="match status" value="1"/>
</dbReference>
<dbReference type="InterPro" id="IPR003593">
    <property type="entry name" value="AAA+_ATPase"/>
</dbReference>
<dbReference type="InterPro" id="IPR013765">
    <property type="entry name" value="DNA_recomb/repair_RecA"/>
</dbReference>
<dbReference type="InterPro" id="IPR020584">
    <property type="entry name" value="DNA_recomb/repair_RecA_CS"/>
</dbReference>
<dbReference type="InterPro" id="IPR027417">
    <property type="entry name" value="P-loop_NTPase"/>
</dbReference>
<dbReference type="InterPro" id="IPR049261">
    <property type="entry name" value="RecA-like_C"/>
</dbReference>
<dbReference type="InterPro" id="IPR049428">
    <property type="entry name" value="RecA-like_N"/>
</dbReference>
<dbReference type="InterPro" id="IPR020588">
    <property type="entry name" value="RecA_ATP-bd"/>
</dbReference>
<dbReference type="InterPro" id="IPR023400">
    <property type="entry name" value="RecA_C_sf"/>
</dbReference>
<dbReference type="InterPro" id="IPR020587">
    <property type="entry name" value="RecA_monomer-monomer_interface"/>
</dbReference>
<dbReference type="NCBIfam" id="TIGR02012">
    <property type="entry name" value="tigrfam_recA"/>
    <property type="match status" value="1"/>
</dbReference>
<dbReference type="PANTHER" id="PTHR45900:SF1">
    <property type="entry name" value="MITOCHONDRIAL DNA REPAIR PROTEIN RECA HOMOLOG-RELATED"/>
    <property type="match status" value="1"/>
</dbReference>
<dbReference type="PANTHER" id="PTHR45900">
    <property type="entry name" value="RECA"/>
    <property type="match status" value="1"/>
</dbReference>
<dbReference type="Pfam" id="PF00154">
    <property type="entry name" value="RecA"/>
    <property type="match status" value="1"/>
</dbReference>
<dbReference type="Pfam" id="PF21096">
    <property type="entry name" value="RecA_C"/>
    <property type="match status" value="1"/>
</dbReference>
<dbReference type="PRINTS" id="PR00142">
    <property type="entry name" value="RECA"/>
</dbReference>
<dbReference type="SMART" id="SM00382">
    <property type="entry name" value="AAA"/>
    <property type="match status" value="1"/>
</dbReference>
<dbReference type="SUPFAM" id="SSF52540">
    <property type="entry name" value="P-loop containing nucleoside triphosphate hydrolases"/>
    <property type="match status" value="1"/>
</dbReference>
<dbReference type="SUPFAM" id="SSF54752">
    <property type="entry name" value="RecA protein, C-terminal domain"/>
    <property type="match status" value="1"/>
</dbReference>
<dbReference type="PROSITE" id="PS00321">
    <property type="entry name" value="RECA_1"/>
    <property type="match status" value="1"/>
</dbReference>
<dbReference type="PROSITE" id="PS50162">
    <property type="entry name" value="RECA_2"/>
    <property type="match status" value="1"/>
</dbReference>
<dbReference type="PROSITE" id="PS50163">
    <property type="entry name" value="RECA_3"/>
    <property type="match status" value="1"/>
</dbReference>
<feature type="chain" id="PRO_1000114310" description="Protein RecA">
    <location>
        <begin position="1"/>
        <end position="345"/>
    </location>
</feature>
<feature type="binding site" evidence="1">
    <location>
        <begin position="66"/>
        <end position="73"/>
    </location>
    <ligand>
        <name>ATP</name>
        <dbReference type="ChEBI" id="CHEBI:30616"/>
    </ligand>
</feature>